<feature type="signal peptide" evidence="1">
    <location>
        <begin position="1"/>
        <end position="15"/>
    </location>
</feature>
<feature type="chain" id="PRO_0000004476" description="Beta-casein">
    <location>
        <begin position="16"/>
        <end position="302"/>
    </location>
</feature>
<feature type="repeat" description="1">
    <location>
        <begin position="144"/>
        <end position="151"/>
    </location>
</feature>
<feature type="repeat" description="2">
    <location>
        <begin position="152"/>
        <end position="159"/>
    </location>
</feature>
<feature type="repeat" description="3">
    <location>
        <begin position="160"/>
        <end position="167"/>
    </location>
</feature>
<feature type="repeat" description="4">
    <location>
        <begin position="168"/>
        <end position="175"/>
    </location>
</feature>
<feature type="repeat" description="5">
    <location>
        <begin position="176"/>
        <end position="182"/>
    </location>
</feature>
<feature type="repeat" description="6">
    <location>
        <begin position="183"/>
        <end position="190"/>
    </location>
</feature>
<feature type="repeat" description="7">
    <location>
        <begin position="191"/>
        <end position="198"/>
    </location>
</feature>
<feature type="repeat" description="8">
    <location>
        <begin position="199"/>
        <end position="204"/>
    </location>
</feature>
<feature type="repeat" description="9">
    <location>
        <begin position="205"/>
        <end position="214"/>
    </location>
</feature>
<feature type="repeat" description="10">
    <location>
        <begin position="215"/>
        <end position="222"/>
    </location>
</feature>
<feature type="repeat" description="11">
    <location>
        <begin position="223"/>
        <end position="230"/>
    </location>
</feature>
<feature type="repeat" description="12">
    <location>
        <begin position="231"/>
        <end position="238"/>
    </location>
</feature>
<feature type="repeat" description="13">
    <location>
        <begin position="241"/>
        <end position="247"/>
    </location>
</feature>
<feature type="repeat" description="14">
    <location>
        <begin position="248"/>
        <end position="255"/>
    </location>
</feature>
<feature type="repeat" description="15">
    <location>
        <begin position="256"/>
        <end position="262"/>
    </location>
</feature>
<feature type="repeat" description="16">
    <location>
        <begin position="263"/>
        <end position="269"/>
    </location>
</feature>
<feature type="region of interest" description="16 X approximate tandem repeats">
    <location>
        <begin position="144"/>
        <end position="269"/>
    </location>
</feature>
<feature type="modified residue" description="Phosphoserine" evidence="2">
    <location>
        <position position="23"/>
    </location>
</feature>
<feature type="modified residue" description="Phosphoserine" evidence="2">
    <location>
        <position position="25"/>
    </location>
</feature>
<accession>P28550</accession>
<evidence type="ECO:0000250" key="1"/>
<evidence type="ECO:0000250" key="2">
    <source>
        <dbReference type="UniProtKB" id="P05814"/>
    </source>
</evidence>
<evidence type="ECO:0000305" key="3"/>
<reference key="1">
    <citation type="journal article" date="1992" name="J. Mol. Endocrinol.">
        <title>Molecular characterization and in-vitro hormonal requirements for expression of two casein genes from a marsupial.</title>
        <authorList>
            <person name="Collet C."/>
            <person name="Joseph R."/>
            <person name="Nicholas K.R."/>
        </authorList>
    </citation>
    <scope>NUCLEOTIDE SEQUENCE [MRNA]</scope>
    <source>
        <tissue>Mammary gland</tissue>
    </source>
</reference>
<dbReference type="EMBL" id="X54715">
    <property type="protein sequence ID" value="CAA38518.1"/>
    <property type="molecule type" value="mRNA"/>
</dbReference>
<dbReference type="PIR" id="S21357">
    <property type="entry name" value="S21357"/>
</dbReference>
<dbReference type="SMR" id="P28550"/>
<dbReference type="GO" id="GO:0005576">
    <property type="term" value="C:extracellular region"/>
    <property type="evidence" value="ECO:0007669"/>
    <property type="project" value="UniProtKB-SubCell"/>
</dbReference>
<sequence>MKLLILTCLVALGFARPMVEKISESEEYVNEVPEKRLKRRFPVKNEHQVEINHHLRPESEMMSLYYQPFYWSEEMRNLKMTSLPKDRRMAVLKSTVSDEVFPSLQHKSLSLPKSKVQPLSRQQILTFHTLQMVPLSHKLLTTPKREMLPIYERERLPAHKRESLLAHERESLLAHERDILVPQREMSFVPEREFLFASERVVLPEQEKEILHNDEREVLAVHKKEILPPFEKEKVLPLLQHRVVPLPQREIVPPFQRETLLPEEILPVNQWELMPEVVPFDPYPFLQPVAPFYYSTELNEKN</sequence>
<keyword id="KW-0494">Milk protein</keyword>
<keyword id="KW-0597">Phosphoprotein</keyword>
<keyword id="KW-0677">Repeat</keyword>
<keyword id="KW-0964">Secreted</keyword>
<keyword id="KW-0732">Signal</keyword>
<gene>
    <name type="primary">CSN2</name>
</gene>
<name>CASB_NOTEU</name>
<organism>
    <name type="scientific">Notamacropus eugenii</name>
    <name type="common">Tammar wallaby</name>
    <name type="synonym">Macropus eugenii</name>
    <dbReference type="NCBI Taxonomy" id="9315"/>
    <lineage>
        <taxon>Eukaryota</taxon>
        <taxon>Metazoa</taxon>
        <taxon>Chordata</taxon>
        <taxon>Craniata</taxon>
        <taxon>Vertebrata</taxon>
        <taxon>Euteleostomi</taxon>
        <taxon>Mammalia</taxon>
        <taxon>Metatheria</taxon>
        <taxon>Diprotodontia</taxon>
        <taxon>Macropodidae</taxon>
        <taxon>Notamacropus</taxon>
    </lineage>
</organism>
<proteinExistence type="evidence at transcript level"/>
<protein>
    <recommendedName>
        <fullName>Beta-casein</fullName>
    </recommendedName>
</protein>
<comment type="function">
    <text>Important role in determination of the surface properties of the casein micelles.</text>
</comment>
<comment type="subcellular location">
    <subcellularLocation>
        <location>Secreted</location>
    </subcellularLocation>
</comment>
<comment type="tissue specificity">
    <text>Mammary gland specific. Secreted in milk.</text>
</comment>
<comment type="induction">
    <text>Maximal induction is dependent upon prolactin and insulin.</text>
</comment>
<comment type="similarity">
    <text evidence="3">Belongs to the beta-casein family.</text>
</comment>